<proteinExistence type="inferred from homology"/>
<feature type="chain" id="PRO_0000057015" description="RNA pyrophosphohydrolase">
    <location>
        <begin position="1"/>
        <end position="198"/>
    </location>
</feature>
<feature type="domain" description="Nudix hydrolase" evidence="1">
    <location>
        <begin position="6"/>
        <end position="149"/>
    </location>
</feature>
<feature type="short sequence motif" description="Nudix box">
    <location>
        <begin position="38"/>
        <end position="59"/>
    </location>
</feature>
<name>RPPH_PASMU</name>
<evidence type="ECO:0000255" key="1">
    <source>
        <dbReference type="HAMAP-Rule" id="MF_00298"/>
    </source>
</evidence>
<gene>
    <name evidence="1" type="primary">rppH</name>
    <name evidence="1" type="synonym">nudH</name>
    <name type="synonym">pnhA</name>
    <name type="ordered locus">PM0082</name>
</gene>
<sequence length="198" mass="23344">MIDFDGYRPNVGIVICNSKGQVLWAKRYGQNSWQFPQGGINDNESAEQAMYRELFEEVGLSPKDVKILYISKHWLRYKLPKRLLRYDSKPVCIGQKQRWFLLQLVSDEKNINMQSSKSPEFDGWRWVSFWYPVRQVVSFKKEVYRKAMKEFASVLFDGAKENLLSSKSNESDLKTHHTTKKSTFLTKHSKKHFHKSRG</sequence>
<dbReference type="EC" id="3.6.1.-" evidence="1"/>
<dbReference type="EMBL" id="AY442169">
    <property type="protein sequence ID" value="AAR14276.1"/>
    <property type="molecule type" value="Genomic_DNA"/>
</dbReference>
<dbReference type="EMBL" id="AE004439">
    <property type="protein sequence ID" value="AAK02166.1"/>
    <property type="molecule type" value="Genomic_DNA"/>
</dbReference>
<dbReference type="RefSeq" id="WP_005722417.1">
    <property type="nucleotide sequence ID" value="NC_002663.1"/>
</dbReference>
<dbReference type="SMR" id="P57809"/>
<dbReference type="STRING" id="272843.PM0082"/>
<dbReference type="EnsemblBacteria" id="AAK02166">
    <property type="protein sequence ID" value="AAK02166"/>
    <property type="gene ID" value="PM0082"/>
</dbReference>
<dbReference type="GeneID" id="77207429"/>
<dbReference type="KEGG" id="pmu:PM0082"/>
<dbReference type="HOGENOM" id="CLU_087195_3_2_6"/>
<dbReference type="OrthoDB" id="9816040at2"/>
<dbReference type="Proteomes" id="UP000000809">
    <property type="component" value="Chromosome"/>
</dbReference>
<dbReference type="GO" id="GO:0005737">
    <property type="term" value="C:cytoplasm"/>
    <property type="evidence" value="ECO:0007669"/>
    <property type="project" value="TreeGrafter"/>
</dbReference>
<dbReference type="GO" id="GO:0034353">
    <property type="term" value="F:mRNA 5'-diphosphatase activity"/>
    <property type="evidence" value="ECO:0007669"/>
    <property type="project" value="TreeGrafter"/>
</dbReference>
<dbReference type="GO" id="GO:0006402">
    <property type="term" value="P:mRNA catabolic process"/>
    <property type="evidence" value="ECO:0007669"/>
    <property type="project" value="TreeGrafter"/>
</dbReference>
<dbReference type="CDD" id="cd03671">
    <property type="entry name" value="NUDIX_Ap4A_hydrolase_plant_like"/>
    <property type="match status" value="1"/>
</dbReference>
<dbReference type="FunFam" id="3.90.79.10:FF:000001">
    <property type="entry name" value="RNA pyrophosphohydrolase"/>
    <property type="match status" value="1"/>
</dbReference>
<dbReference type="Gene3D" id="3.90.79.10">
    <property type="entry name" value="Nucleoside Triphosphate Pyrophosphohydrolase"/>
    <property type="match status" value="1"/>
</dbReference>
<dbReference type="HAMAP" id="MF_00298">
    <property type="entry name" value="Nudix_RppH"/>
    <property type="match status" value="1"/>
</dbReference>
<dbReference type="InterPro" id="IPR020476">
    <property type="entry name" value="Nudix_hydrolase"/>
</dbReference>
<dbReference type="InterPro" id="IPR015797">
    <property type="entry name" value="NUDIX_hydrolase-like_dom_sf"/>
</dbReference>
<dbReference type="InterPro" id="IPR020084">
    <property type="entry name" value="NUDIX_hydrolase_CS"/>
</dbReference>
<dbReference type="InterPro" id="IPR000086">
    <property type="entry name" value="NUDIX_hydrolase_dom"/>
</dbReference>
<dbReference type="InterPro" id="IPR022927">
    <property type="entry name" value="RppH"/>
</dbReference>
<dbReference type="NCBIfam" id="NF001934">
    <property type="entry name" value="PRK00714.1-1"/>
    <property type="match status" value="1"/>
</dbReference>
<dbReference type="NCBIfam" id="NF001937">
    <property type="entry name" value="PRK00714.1-4"/>
    <property type="match status" value="1"/>
</dbReference>
<dbReference type="NCBIfam" id="NF001938">
    <property type="entry name" value="PRK00714.1-5"/>
    <property type="match status" value="1"/>
</dbReference>
<dbReference type="PANTHER" id="PTHR23114">
    <property type="entry name" value="M7GPPPN-MRNA HYDROLASE"/>
    <property type="match status" value="1"/>
</dbReference>
<dbReference type="PANTHER" id="PTHR23114:SF17">
    <property type="entry name" value="M7GPPPN-MRNA HYDROLASE"/>
    <property type="match status" value="1"/>
</dbReference>
<dbReference type="Pfam" id="PF00293">
    <property type="entry name" value="NUDIX"/>
    <property type="match status" value="1"/>
</dbReference>
<dbReference type="PRINTS" id="PR00502">
    <property type="entry name" value="NUDIXFAMILY"/>
</dbReference>
<dbReference type="SUPFAM" id="SSF55811">
    <property type="entry name" value="Nudix"/>
    <property type="match status" value="1"/>
</dbReference>
<dbReference type="PROSITE" id="PS51462">
    <property type="entry name" value="NUDIX"/>
    <property type="match status" value="1"/>
</dbReference>
<dbReference type="PROSITE" id="PS00893">
    <property type="entry name" value="NUDIX_BOX"/>
    <property type="match status" value="1"/>
</dbReference>
<accession>P57809</accession>
<organism>
    <name type="scientific">Pasteurella multocida (strain Pm70)</name>
    <dbReference type="NCBI Taxonomy" id="272843"/>
    <lineage>
        <taxon>Bacteria</taxon>
        <taxon>Pseudomonadati</taxon>
        <taxon>Pseudomonadota</taxon>
        <taxon>Gammaproteobacteria</taxon>
        <taxon>Pasteurellales</taxon>
        <taxon>Pasteurellaceae</taxon>
        <taxon>Pasteurella</taxon>
    </lineage>
</organism>
<keyword id="KW-0378">Hydrolase</keyword>
<keyword id="KW-1185">Reference proteome</keyword>
<reference key="1">
    <citation type="submission" date="2003-10" db="EMBL/GenBank/DDBJ databases">
        <title>The nudix hydrolase, PnhA is associated with the ability of Pasteurella multocida to infect host cells.</title>
        <authorList>
            <person name="Tworek T.N."/>
            <person name="Chang C.I."/>
            <person name="Ruffolo C.G."/>
        </authorList>
    </citation>
    <scope>NUCLEOTIDE SEQUENCE [GENOMIC DNA]</scope>
    <source>
        <strain>Serogroup A:1 / X73</strain>
    </source>
</reference>
<reference key="2">
    <citation type="journal article" date="2001" name="Proc. Natl. Acad. Sci. U.S.A.">
        <title>Complete genomic sequence of Pasteurella multocida Pm70.</title>
        <authorList>
            <person name="May B.J."/>
            <person name="Zhang Q."/>
            <person name="Li L.L."/>
            <person name="Paustian M.L."/>
            <person name="Whittam T.S."/>
            <person name="Kapur V."/>
        </authorList>
    </citation>
    <scope>NUCLEOTIDE SEQUENCE [LARGE SCALE GENOMIC DNA]</scope>
    <source>
        <strain>Pm70</strain>
    </source>
</reference>
<protein>
    <recommendedName>
        <fullName evidence="1">RNA pyrophosphohydrolase</fullName>
        <ecNumber evidence="1">3.6.1.-</ecNumber>
    </recommendedName>
    <alternativeName>
        <fullName evidence="1">(Di)nucleoside polyphosphate hydrolase</fullName>
    </alternativeName>
</protein>
<comment type="function">
    <text evidence="1">Accelerates the degradation of transcripts by removing pyrophosphate from the 5'-end of triphosphorylated RNA, leading to a more labile monophosphorylated state that can stimulate subsequent ribonuclease cleavage.</text>
</comment>
<comment type="cofactor">
    <cofactor evidence="1">
        <name>a divalent metal cation</name>
        <dbReference type="ChEBI" id="CHEBI:60240"/>
    </cofactor>
</comment>
<comment type="similarity">
    <text evidence="1">Belongs to the Nudix hydrolase family. RppH subfamily.</text>
</comment>